<proteinExistence type="inferred from homology"/>
<organism>
    <name type="scientific">Pseudomonas aeruginosa (strain ATCC 15692 / DSM 22644 / CIP 104116 / JCM 14847 / LMG 12228 / 1C / PRS 101 / PAO1)</name>
    <dbReference type="NCBI Taxonomy" id="208964"/>
    <lineage>
        <taxon>Bacteria</taxon>
        <taxon>Pseudomonadati</taxon>
        <taxon>Pseudomonadota</taxon>
        <taxon>Gammaproteobacteria</taxon>
        <taxon>Pseudomonadales</taxon>
        <taxon>Pseudomonadaceae</taxon>
        <taxon>Pseudomonas</taxon>
    </lineage>
</organism>
<name>SYL_PSEAE</name>
<comment type="catalytic activity">
    <reaction evidence="1">
        <text>tRNA(Leu) + L-leucine + ATP = L-leucyl-tRNA(Leu) + AMP + diphosphate</text>
        <dbReference type="Rhea" id="RHEA:11688"/>
        <dbReference type="Rhea" id="RHEA-COMP:9613"/>
        <dbReference type="Rhea" id="RHEA-COMP:9622"/>
        <dbReference type="ChEBI" id="CHEBI:30616"/>
        <dbReference type="ChEBI" id="CHEBI:33019"/>
        <dbReference type="ChEBI" id="CHEBI:57427"/>
        <dbReference type="ChEBI" id="CHEBI:78442"/>
        <dbReference type="ChEBI" id="CHEBI:78494"/>
        <dbReference type="ChEBI" id="CHEBI:456215"/>
        <dbReference type="EC" id="6.1.1.4"/>
    </reaction>
</comment>
<comment type="subcellular location">
    <subcellularLocation>
        <location evidence="1">Cytoplasm</location>
    </subcellularLocation>
</comment>
<comment type="similarity">
    <text evidence="1">Belongs to the class-I aminoacyl-tRNA synthetase family.</text>
</comment>
<protein>
    <recommendedName>
        <fullName evidence="1">Leucine--tRNA ligase</fullName>
        <ecNumber evidence="1">6.1.1.4</ecNumber>
    </recommendedName>
    <alternativeName>
        <fullName evidence="1">Leucyl-tRNA synthetase</fullName>
        <shortName evidence="1">LeuRS</shortName>
    </alternativeName>
</protein>
<sequence length="873" mass="97648">MHEQYQPLEIETQAQNYWKEHQSFLVRELPDKEKFYCLSMFPYPSGKLHMGHVRNYTIGDVISRYHRMQGRNVLQPMGWDAFGMPAENAAMKNNVAPAAWTYDNIAYMKSQLDSLGLAIDWSREVTTCKPDYYRWEQWLFTRLFEKGVIYRKNGTVNWDPVDQTVLANEQVIDGRGWRSGALIEKREIPMYYFKITAYAEELLESLDNLPGWPEQVKTMQRNWIGKSRGMEIGFPYDQASIGHAGQLKVFTTRPDTLMGATYVAVAAEHPLATQAAQNDPQLQAFIDECKRGGVAEADIATQEKKGMATSLFVEHPLTGDKLPVWVANYVLMNYGEGAVMAVPGHDERDFEFANKYGLPIRQVIAKVEGDNDFESSVWKEWYGAKDESVLTVNSGKYDNLGYQAAFDAIGADLEAKGLGQARTQFRLRDWGISRQRYWGCPIPIIHCEACGDVPVPADQLPVVLPEDVVPDGSGSPLAKMPEFYECNCPKCGQPAKRETDTMDTFVESSWYFARYACPQFEGGMLDRKAADYWLPVDQYIGGIEHAILHLLYARFFHKLMRDEGLVGSDEPFKNLLTQGMVVADTYYRTTANGGKDWFNPADVEVERDAKAKVVGARLKSDGQPVEIGGTEKMSKSKNNGVDPQSMIDQYGADTCRLFMMFASPPDMSLEWSDAGVEGANRFLRRVWRLAHAHVSAGLPGALDVAALSDAQKQVRRAIHLAIRQASQDVGQHHKFNTAIAAVMTLMNVLEKAPNQDAQDRALIQEGLETVVLLLAPITPHICHVLWGQLGHAEAVIDARWPSVDESALVQDTLQLVVQVNGKLRGHIDVAASASREDVEAAARANENVLRFTEGLSIRKVIVVPGKLVNIVAN</sequence>
<dbReference type="EC" id="6.1.1.4" evidence="1"/>
<dbReference type="EMBL" id="AE004091">
    <property type="protein sequence ID" value="AAG07374.1"/>
    <property type="molecule type" value="Genomic_DNA"/>
</dbReference>
<dbReference type="PIR" id="E83148">
    <property type="entry name" value="E83148"/>
</dbReference>
<dbReference type="RefSeq" id="NP_252676.1">
    <property type="nucleotide sequence ID" value="NC_002516.2"/>
</dbReference>
<dbReference type="RefSeq" id="WP_003100324.1">
    <property type="nucleotide sequence ID" value="NZ_QZGE01000001.1"/>
</dbReference>
<dbReference type="SMR" id="Q9HX33"/>
<dbReference type="FunCoup" id="Q9HX33">
    <property type="interactions" value="733"/>
</dbReference>
<dbReference type="STRING" id="208964.PA3987"/>
<dbReference type="PaxDb" id="208964-PA3987"/>
<dbReference type="GeneID" id="878925"/>
<dbReference type="KEGG" id="pae:PA3987"/>
<dbReference type="PATRIC" id="fig|208964.12.peg.4180"/>
<dbReference type="PseudoCAP" id="PA3987"/>
<dbReference type="HOGENOM" id="CLU_004427_0_0_6"/>
<dbReference type="InParanoid" id="Q9HX33"/>
<dbReference type="OrthoDB" id="9810365at2"/>
<dbReference type="PhylomeDB" id="Q9HX33"/>
<dbReference type="BioCyc" id="PAER208964:G1FZ6-4061-MONOMER"/>
<dbReference type="Proteomes" id="UP000002438">
    <property type="component" value="Chromosome"/>
</dbReference>
<dbReference type="GO" id="GO:0005829">
    <property type="term" value="C:cytosol"/>
    <property type="evidence" value="ECO:0000318"/>
    <property type="project" value="GO_Central"/>
</dbReference>
<dbReference type="GO" id="GO:0002161">
    <property type="term" value="F:aminoacyl-tRNA deacylase activity"/>
    <property type="evidence" value="ECO:0007669"/>
    <property type="project" value="InterPro"/>
</dbReference>
<dbReference type="GO" id="GO:0005524">
    <property type="term" value="F:ATP binding"/>
    <property type="evidence" value="ECO:0007669"/>
    <property type="project" value="UniProtKB-UniRule"/>
</dbReference>
<dbReference type="GO" id="GO:0004823">
    <property type="term" value="F:leucine-tRNA ligase activity"/>
    <property type="evidence" value="ECO:0000318"/>
    <property type="project" value="GO_Central"/>
</dbReference>
<dbReference type="GO" id="GO:0006429">
    <property type="term" value="P:leucyl-tRNA aminoacylation"/>
    <property type="evidence" value="ECO:0000318"/>
    <property type="project" value="GO_Central"/>
</dbReference>
<dbReference type="CDD" id="cd07958">
    <property type="entry name" value="Anticodon_Ia_Leu_BEm"/>
    <property type="match status" value="1"/>
</dbReference>
<dbReference type="CDD" id="cd00812">
    <property type="entry name" value="LeuRS_core"/>
    <property type="match status" value="1"/>
</dbReference>
<dbReference type="FunFam" id="1.10.730.10:FF:000003">
    <property type="entry name" value="Leucine--tRNA ligase"/>
    <property type="match status" value="1"/>
</dbReference>
<dbReference type="FunFam" id="2.20.28.290:FF:000001">
    <property type="entry name" value="Leucine--tRNA ligase"/>
    <property type="match status" value="1"/>
</dbReference>
<dbReference type="FunFam" id="3.10.20.590:FF:000001">
    <property type="entry name" value="Leucine--tRNA ligase"/>
    <property type="match status" value="1"/>
</dbReference>
<dbReference type="FunFam" id="3.40.50.620:FF:000003">
    <property type="entry name" value="Leucine--tRNA ligase"/>
    <property type="match status" value="1"/>
</dbReference>
<dbReference type="FunFam" id="3.40.50.620:FF:000124">
    <property type="entry name" value="Leucine--tRNA ligase"/>
    <property type="match status" value="1"/>
</dbReference>
<dbReference type="FunFam" id="3.90.740.10:FF:000012">
    <property type="entry name" value="Leucine--tRNA ligase"/>
    <property type="match status" value="1"/>
</dbReference>
<dbReference type="Gene3D" id="2.20.28.290">
    <property type="match status" value="1"/>
</dbReference>
<dbReference type="Gene3D" id="3.10.20.590">
    <property type="match status" value="1"/>
</dbReference>
<dbReference type="Gene3D" id="3.40.50.620">
    <property type="entry name" value="HUPs"/>
    <property type="match status" value="2"/>
</dbReference>
<dbReference type="Gene3D" id="1.10.730.10">
    <property type="entry name" value="Isoleucyl-tRNA Synthetase, Domain 1"/>
    <property type="match status" value="2"/>
</dbReference>
<dbReference type="Gene3D" id="3.90.740.10">
    <property type="entry name" value="Valyl/Leucyl/Isoleucyl-tRNA synthetase, editing domain"/>
    <property type="match status" value="1"/>
</dbReference>
<dbReference type="HAMAP" id="MF_00049_B">
    <property type="entry name" value="Leu_tRNA_synth_B"/>
    <property type="match status" value="1"/>
</dbReference>
<dbReference type="InterPro" id="IPR001412">
    <property type="entry name" value="aa-tRNA-synth_I_CS"/>
</dbReference>
<dbReference type="InterPro" id="IPR002300">
    <property type="entry name" value="aa-tRNA-synth_Ia"/>
</dbReference>
<dbReference type="InterPro" id="IPR002302">
    <property type="entry name" value="Leu-tRNA-ligase"/>
</dbReference>
<dbReference type="InterPro" id="IPR025709">
    <property type="entry name" value="Leu_tRNA-synth_edit"/>
</dbReference>
<dbReference type="InterPro" id="IPR013155">
    <property type="entry name" value="M/V/L/I-tRNA-synth_anticd-bd"/>
</dbReference>
<dbReference type="InterPro" id="IPR015413">
    <property type="entry name" value="Methionyl/Leucyl_tRNA_Synth"/>
</dbReference>
<dbReference type="InterPro" id="IPR014729">
    <property type="entry name" value="Rossmann-like_a/b/a_fold"/>
</dbReference>
<dbReference type="InterPro" id="IPR009080">
    <property type="entry name" value="tRNAsynth_Ia_anticodon-bd"/>
</dbReference>
<dbReference type="InterPro" id="IPR009008">
    <property type="entry name" value="Val/Leu/Ile-tRNA-synth_edit"/>
</dbReference>
<dbReference type="NCBIfam" id="TIGR00396">
    <property type="entry name" value="leuS_bact"/>
    <property type="match status" value="1"/>
</dbReference>
<dbReference type="PANTHER" id="PTHR43740:SF2">
    <property type="entry name" value="LEUCINE--TRNA LIGASE, MITOCHONDRIAL"/>
    <property type="match status" value="1"/>
</dbReference>
<dbReference type="PANTHER" id="PTHR43740">
    <property type="entry name" value="LEUCYL-TRNA SYNTHETASE"/>
    <property type="match status" value="1"/>
</dbReference>
<dbReference type="Pfam" id="PF08264">
    <property type="entry name" value="Anticodon_1"/>
    <property type="match status" value="1"/>
</dbReference>
<dbReference type="Pfam" id="PF00133">
    <property type="entry name" value="tRNA-synt_1"/>
    <property type="match status" value="2"/>
</dbReference>
<dbReference type="Pfam" id="PF13603">
    <property type="entry name" value="tRNA-synt_1_2"/>
    <property type="match status" value="1"/>
</dbReference>
<dbReference type="Pfam" id="PF09334">
    <property type="entry name" value="tRNA-synt_1g"/>
    <property type="match status" value="1"/>
</dbReference>
<dbReference type="PRINTS" id="PR00985">
    <property type="entry name" value="TRNASYNTHLEU"/>
</dbReference>
<dbReference type="SUPFAM" id="SSF47323">
    <property type="entry name" value="Anticodon-binding domain of a subclass of class I aminoacyl-tRNA synthetases"/>
    <property type="match status" value="1"/>
</dbReference>
<dbReference type="SUPFAM" id="SSF52374">
    <property type="entry name" value="Nucleotidylyl transferase"/>
    <property type="match status" value="1"/>
</dbReference>
<dbReference type="SUPFAM" id="SSF50677">
    <property type="entry name" value="ValRS/IleRS/LeuRS editing domain"/>
    <property type="match status" value="1"/>
</dbReference>
<dbReference type="PROSITE" id="PS00178">
    <property type="entry name" value="AA_TRNA_LIGASE_I"/>
    <property type="match status" value="1"/>
</dbReference>
<gene>
    <name evidence="1" type="primary">leuS</name>
    <name type="ordered locus">PA3987</name>
</gene>
<feature type="chain" id="PRO_0000152066" description="Leucine--tRNA ligase">
    <location>
        <begin position="1"/>
        <end position="873"/>
    </location>
</feature>
<feature type="region of interest" description="Disordered" evidence="2">
    <location>
        <begin position="624"/>
        <end position="643"/>
    </location>
</feature>
<feature type="short sequence motif" description="'HIGH' region">
    <location>
        <begin position="42"/>
        <end position="52"/>
    </location>
</feature>
<feature type="short sequence motif" description="'KMSKS' region">
    <location>
        <begin position="632"/>
        <end position="636"/>
    </location>
</feature>
<feature type="binding site" evidence="1">
    <location>
        <position position="635"/>
    </location>
    <ligand>
        <name>ATP</name>
        <dbReference type="ChEBI" id="CHEBI:30616"/>
    </ligand>
</feature>
<reference key="1">
    <citation type="journal article" date="2000" name="Nature">
        <title>Complete genome sequence of Pseudomonas aeruginosa PAO1, an opportunistic pathogen.</title>
        <authorList>
            <person name="Stover C.K."/>
            <person name="Pham X.-Q.T."/>
            <person name="Erwin A.L."/>
            <person name="Mizoguchi S.D."/>
            <person name="Warrener P."/>
            <person name="Hickey M.J."/>
            <person name="Brinkman F.S.L."/>
            <person name="Hufnagle W.O."/>
            <person name="Kowalik D.J."/>
            <person name="Lagrou M."/>
            <person name="Garber R.L."/>
            <person name="Goltry L."/>
            <person name="Tolentino E."/>
            <person name="Westbrock-Wadman S."/>
            <person name="Yuan Y."/>
            <person name="Brody L.L."/>
            <person name="Coulter S.N."/>
            <person name="Folger K.R."/>
            <person name="Kas A."/>
            <person name="Larbig K."/>
            <person name="Lim R.M."/>
            <person name="Smith K.A."/>
            <person name="Spencer D.H."/>
            <person name="Wong G.K.-S."/>
            <person name="Wu Z."/>
            <person name="Paulsen I.T."/>
            <person name="Reizer J."/>
            <person name="Saier M.H. Jr."/>
            <person name="Hancock R.E.W."/>
            <person name="Lory S."/>
            <person name="Olson M.V."/>
        </authorList>
    </citation>
    <scope>NUCLEOTIDE SEQUENCE [LARGE SCALE GENOMIC DNA]</scope>
    <source>
        <strain>ATCC 15692 / DSM 22644 / CIP 104116 / JCM 14847 / LMG 12228 / 1C / PRS 101 / PAO1</strain>
    </source>
</reference>
<accession>Q9HX33</accession>
<keyword id="KW-0030">Aminoacyl-tRNA synthetase</keyword>
<keyword id="KW-0067">ATP-binding</keyword>
<keyword id="KW-0963">Cytoplasm</keyword>
<keyword id="KW-0436">Ligase</keyword>
<keyword id="KW-0547">Nucleotide-binding</keyword>
<keyword id="KW-0648">Protein biosynthesis</keyword>
<keyword id="KW-1185">Reference proteome</keyword>
<evidence type="ECO:0000255" key="1">
    <source>
        <dbReference type="HAMAP-Rule" id="MF_00049"/>
    </source>
</evidence>
<evidence type="ECO:0000256" key="2">
    <source>
        <dbReference type="SAM" id="MobiDB-lite"/>
    </source>
</evidence>